<reference key="1">
    <citation type="journal article" date="1994" name="J. Biol. Chem.">
        <title>Plant mitochondrial NAD+-dependent malic enzyme. cDNA cloning, deduced primary structure of the 59- and 62-kDa subunits, import, gene complexity and expression analysis.</title>
        <authorList>
            <person name="Winning B.M."/>
            <person name="Bourguignon J."/>
            <person name="Leaver C.J."/>
        </authorList>
    </citation>
    <scope>NUCLEOTIDE SEQUENCE [MRNA]</scope>
    <scope>PARTIAL PROTEIN SEQUENCE</scope>
    <source>
        <strain>cv. Desiree</strain>
        <tissue>Leaf</tissue>
    </source>
</reference>
<dbReference type="EC" id="1.1.1.39" evidence="1"/>
<dbReference type="EMBL" id="Z23023">
    <property type="protein sequence ID" value="CAA80559.1"/>
    <property type="molecule type" value="mRNA"/>
</dbReference>
<dbReference type="PIR" id="B53318">
    <property type="entry name" value="B53318"/>
</dbReference>
<dbReference type="RefSeq" id="NP_001275278.1">
    <property type="nucleotide sequence ID" value="NM_001288349.1"/>
</dbReference>
<dbReference type="SMR" id="P37221"/>
<dbReference type="FunCoup" id="P37221">
    <property type="interactions" value="1121"/>
</dbReference>
<dbReference type="STRING" id="4113.P37221"/>
<dbReference type="GeneID" id="102598070"/>
<dbReference type="KEGG" id="sot:102598070"/>
<dbReference type="InParanoid" id="P37221"/>
<dbReference type="OrthoDB" id="5365701at2759"/>
<dbReference type="SABIO-RK" id="P37221"/>
<dbReference type="Proteomes" id="UP000011115">
    <property type="component" value="Unassembled WGS sequence"/>
</dbReference>
<dbReference type="ExpressionAtlas" id="P37221">
    <property type="expression patterns" value="baseline and differential"/>
</dbReference>
<dbReference type="GO" id="GO:0005759">
    <property type="term" value="C:mitochondrial matrix"/>
    <property type="evidence" value="ECO:0007669"/>
    <property type="project" value="UniProtKB-SubCell"/>
</dbReference>
<dbReference type="GO" id="GO:0004471">
    <property type="term" value="F:malate dehydrogenase (decarboxylating) (NAD+) activity"/>
    <property type="evidence" value="ECO:0000318"/>
    <property type="project" value="GO_Central"/>
</dbReference>
<dbReference type="GO" id="GO:0046872">
    <property type="term" value="F:metal ion binding"/>
    <property type="evidence" value="ECO:0007669"/>
    <property type="project" value="UniProtKB-KW"/>
</dbReference>
<dbReference type="GO" id="GO:0051287">
    <property type="term" value="F:NAD binding"/>
    <property type="evidence" value="ECO:0007669"/>
    <property type="project" value="InterPro"/>
</dbReference>
<dbReference type="GO" id="GO:0006108">
    <property type="term" value="P:malate metabolic process"/>
    <property type="evidence" value="ECO:0000318"/>
    <property type="project" value="GO_Central"/>
</dbReference>
<dbReference type="GO" id="GO:0006090">
    <property type="term" value="P:pyruvate metabolic process"/>
    <property type="evidence" value="ECO:0000318"/>
    <property type="project" value="GO_Central"/>
</dbReference>
<dbReference type="CDD" id="cd05312">
    <property type="entry name" value="NAD_bind_1_malic_enz"/>
    <property type="match status" value="1"/>
</dbReference>
<dbReference type="FunFam" id="3.40.50.10380:FF:000005">
    <property type="entry name" value="Malic enzyme"/>
    <property type="match status" value="1"/>
</dbReference>
<dbReference type="FunFam" id="3.40.50.720:FF:000237">
    <property type="entry name" value="Malic enzyme"/>
    <property type="match status" value="1"/>
</dbReference>
<dbReference type="Gene3D" id="3.40.50.10380">
    <property type="entry name" value="Malic enzyme, N-terminal domain"/>
    <property type="match status" value="1"/>
</dbReference>
<dbReference type="Gene3D" id="3.40.50.720">
    <property type="entry name" value="NAD(P)-binding Rossmann-like Domain"/>
    <property type="match status" value="1"/>
</dbReference>
<dbReference type="InterPro" id="IPR046346">
    <property type="entry name" value="Aminoacid_DH-like_N_sf"/>
</dbReference>
<dbReference type="InterPro" id="IPR015884">
    <property type="entry name" value="Malic_enzyme_CS"/>
</dbReference>
<dbReference type="InterPro" id="IPR012301">
    <property type="entry name" value="Malic_N_dom"/>
</dbReference>
<dbReference type="InterPro" id="IPR037062">
    <property type="entry name" value="Malic_N_dom_sf"/>
</dbReference>
<dbReference type="InterPro" id="IPR012302">
    <property type="entry name" value="Malic_NAD-bd"/>
</dbReference>
<dbReference type="InterPro" id="IPR001891">
    <property type="entry name" value="Malic_OxRdtase"/>
</dbReference>
<dbReference type="InterPro" id="IPR036291">
    <property type="entry name" value="NAD(P)-bd_dom_sf"/>
</dbReference>
<dbReference type="NCBIfam" id="NF010052">
    <property type="entry name" value="PRK13529.1"/>
    <property type="match status" value="1"/>
</dbReference>
<dbReference type="PANTHER" id="PTHR23406">
    <property type="entry name" value="MALIC ENZYME-RELATED"/>
    <property type="match status" value="1"/>
</dbReference>
<dbReference type="PANTHER" id="PTHR23406:SF32">
    <property type="entry name" value="NADP-DEPENDENT MALIC ENZYME"/>
    <property type="match status" value="1"/>
</dbReference>
<dbReference type="Pfam" id="PF00390">
    <property type="entry name" value="malic"/>
    <property type="match status" value="1"/>
</dbReference>
<dbReference type="Pfam" id="PF03949">
    <property type="entry name" value="Malic_M"/>
    <property type="match status" value="1"/>
</dbReference>
<dbReference type="PIRSF" id="PIRSF000106">
    <property type="entry name" value="ME"/>
    <property type="match status" value="1"/>
</dbReference>
<dbReference type="PRINTS" id="PR00072">
    <property type="entry name" value="MALOXRDTASE"/>
</dbReference>
<dbReference type="SMART" id="SM01274">
    <property type="entry name" value="malic"/>
    <property type="match status" value="1"/>
</dbReference>
<dbReference type="SMART" id="SM00919">
    <property type="entry name" value="Malic_M"/>
    <property type="match status" value="1"/>
</dbReference>
<dbReference type="SUPFAM" id="SSF53223">
    <property type="entry name" value="Aminoacid dehydrogenase-like, N-terminal domain"/>
    <property type="match status" value="1"/>
</dbReference>
<dbReference type="SUPFAM" id="SSF51735">
    <property type="entry name" value="NAD(P)-binding Rossmann-fold domains"/>
    <property type="match status" value="1"/>
</dbReference>
<dbReference type="PROSITE" id="PS00331">
    <property type="entry name" value="MALIC_ENZYMES"/>
    <property type="match status" value="1"/>
</dbReference>
<proteinExistence type="evidence at protein level"/>
<protein>
    <recommendedName>
        <fullName>NAD-dependent malic enzyme, mitochondrial</fullName>
        <shortName>NAD-ME</shortName>
        <ecNumber evidence="1">1.1.1.39</ecNumber>
    </recommendedName>
</protein>
<evidence type="ECO:0000250" key="1">
    <source>
        <dbReference type="UniProtKB" id="P23368"/>
    </source>
</evidence>
<evidence type="ECO:0000250" key="2">
    <source>
        <dbReference type="UniProtKB" id="P37224"/>
    </source>
</evidence>
<evidence type="ECO:0000305" key="3"/>
<comment type="catalytic activity">
    <reaction evidence="1">
        <text>(S)-malate + NAD(+) = pyruvate + CO2 + NADH</text>
        <dbReference type="Rhea" id="RHEA:12653"/>
        <dbReference type="ChEBI" id="CHEBI:15361"/>
        <dbReference type="ChEBI" id="CHEBI:15589"/>
        <dbReference type="ChEBI" id="CHEBI:16526"/>
        <dbReference type="ChEBI" id="CHEBI:57540"/>
        <dbReference type="ChEBI" id="CHEBI:57945"/>
        <dbReference type="EC" id="1.1.1.39"/>
    </reaction>
</comment>
<comment type="cofactor">
    <cofactor evidence="1">
        <name>Mg(2+)</name>
        <dbReference type="ChEBI" id="CHEBI:18420"/>
    </cofactor>
    <cofactor evidence="1">
        <name>Mn(2+)</name>
        <dbReference type="ChEBI" id="CHEBI:29035"/>
    </cofactor>
    <text evidence="1">Divalent metal cations. Prefers magnesium or manganese.</text>
</comment>
<comment type="subunit">
    <text evidence="2">Heterodimer of two related subunits.</text>
</comment>
<comment type="subcellular location">
    <subcellularLocation>
        <location evidence="2">Mitochondrion matrix</location>
    </subcellularLocation>
</comment>
<comment type="similarity">
    <text evidence="3">Belongs to the malic enzymes family.</text>
</comment>
<accession>P37221</accession>
<feature type="transit peptide" description="Mitochondrion">
    <location>
        <begin position="1"/>
        <end position="34"/>
    </location>
</feature>
<feature type="chain" id="PRO_0000018543" description="NAD-dependent malic enzyme, mitochondrial">
    <location>
        <begin position="35"/>
        <end position="626"/>
    </location>
</feature>
<feature type="active site" description="Proton donor" evidence="1">
    <location>
        <position position="146"/>
    </location>
</feature>
<feature type="active site" description="Proton acceptor" evidence="1">
    <location>
        <position position="217"/>
    </location>
</feature>
<feature type="binding site" evidence="1">
    <location>
        <position position="91"/>
    </location>
    <ligand>
        <name>fumarate</name>
        <dbReference type="ChEBI" id="CHEBI:29806"/>
        <note>allosteric activator</note>
    </ligand>
</feature>
<feature type="binding site" evidence="1">
    <location>
        <position position="125"/>
    </location>
    <ligand>
        <name>fumarate</name>
        <dbReference type="ChEBI" id="CHEBI:29806"/>
        <note>allosteric activator</note>
    </ligand>
</feature>
<feature type="binding site" evidence="1">
    <location>
        <position position="199"/>
    </location>
    <ligand>
        <name>(S)-malate</name>
        <dbReference type="ChEBI" id="CHEBI:15589"/>
    </ligand>
</feature>
<feature type="binding site" evidence="1">
    <location>
        <position position="199"/>
    </location>
    <ligand>
        <name>NAD(+)</name>
        <dbReference type="ChEBI" id="CHEBI:57540"/>
    </ligand>
</feature>
<feature type="binding site" evidence="1">
    <location>
        <position position="288"/>
    </location>
    <ligand>
        <name>a divalent metal cation</name>
        <dbReference type="ChEBI" id="CHEBI:60240"/>
    </ligand>
</feature>
<feature type="binding site" evidence="1">
    <location>
        <position position="289"/>
    </location>
    <ligand>
        <name>a divalent metal cation</name>
        <dbReference type="ChEBI" id="CHEBI:60240"/>
    </ligand>
</feature>
<feature type="binding site" evidence="1">
    <location>
        <position position="312"/>
    </location>
    <ligand>
        <name>a divalent metal cation</name>
        <dbReference type="ChEBI" id="CHEBI:60240"/>
    </ligand>
</feature>
<feature type="binding site" evidence="1">
    <location>
        <position position="348"/>
    </location>
    <ligand>
        <name>NAD(+)</name>
        <dbReference type="ChEBI" id="CHEBI:57540"/>
    </ligand>
</feature>
<feature type="binding site" evidence="1">
    <location>
        <position position="351"/>
    </location>
    <ligand>
        <name>NAD(+)</name>
        <dbReference type="ChEBI" id="CHEBI:57540"/>
    </ligand>
</feature>
<feature type="binding site" evidence="1">
    <location>
        <position position="467"/>
    </location>
    <ligand>
        <name>(S)-malate</name>
        <dbReference type="ChEBI" id="CHEBI:15589"/>
    </ligand>
</feature>
<feature type="binding site" evidence="1">
    <location>
        <position position="512"/>
    </location>
    <ligand>
        <name>(S)-malate</name>
        <dbReference type="ChEBI" id="CHEBI:15589"/>
    </ligand>
</feature>
<sequence>MAIFSNQMRLSSTLLKRLHQRVAAAVNSSSSRNFTTTEGHRPTIVHKRSLDILHDPWFNKGTAFSFTERDRLHIRGLLPPNVMSFEQQIARFMADLKRLEVQARDGPSDPYVLAKWRILNRLHDRNETLYYKVLMENIEEYAPIVYTPTVGLVCQKYSGLFRRPRGMYFSAEDRGEMMSMVYNWPADQVDMIVVTDGSRILGLGDLGIQGIGIAIGKLDLYVAAAGINPQRVLPVMIDVGTDNENLLKDPLYLGLQDHRLDGEEYIEVIDEFMEAVFTRWPHVIVQFEDFQSKWAFKLLQRYRNNYRMFNDDIQGTAGVAIAGLLGAVRAQGRPMIDFPKMKIVVAGAGSAGIGVLNAARKTMARMLGNTEIAFESARSQFWVVDAKGLITEARENVDPDARPFARKIKEIERQGLSEGATLAEVVREVKPDVLLGLSACGGLFSKEVLEALKHSTSTRPAIFPMSNPTRNAECTPEEAFSILGENIIFASGSPFKDVDLGNGHVGHCNQANNMFLFPGIGLGTLLSGSRIVSDGMLQAAAECLAAYITEEEVLKGIIYPSISRIRDITKEVAAAVVKEAIEEDLAEGYREMDSRELRKLDEAQISEFVENNMWSPDYPTLVYKKD</sequence>
<name>MAOM_SOLTU</name>
<keyword id="KW-0903">Direct protein sequencing</keyword>
<keyword id="KW-0479">Metal-binding</keyword>
<keyword id="KW-0496">Mitochondrion</keyword>
<keyword id="KW-0520">NAD</keyword>
<keyword id="KW-0560">Oxidoreductase</keyword>
<keyword id="KW-1185">Reference proteome</keyword>
<keyword id="KW-0809">Transit peptide</keyword>
<organism>
    <name type="scientific">Solanum tuberosum</name>
    <name type="common">Potato</name>
    <dbReference type="NCBI Taxonomy" id="4113"/>
    <lineage>
        <taxon>Eukaryota</taxon>
        <taxon>Viridiplantae</taxon>
        <taxon>Streptophyta</taxon>
        <taxon>Embryophyta</taxon>
        <taxon>Tracheophyta</taxon>
        <taxon>Spermatophyta</taxon>
        <taxon>Magnoliopsida</taxon>
        <taxon>eudicotyledons</taxon>
        <taxon>Gunneridae</taxon>
        <taxon>Pentapetalae</taxon>
        <taxon>asterids</taxon>
        <taxon>lamiids</taxon>
        <taxon>Solanales</taxon>
        <taxon>Solanaceae</taxon>
        <taxon>Solanoideae</taxon>
        <taxon>Solaneae</taxon>
        <taxon>Solanum</taxon>
    </lineage>
</organism>